<protein>
    <recommendedName>
        <fullName>UPF0669 protein C6orf120 homolog</fullName>
    </recommendedName>
</protein>
<comment type="subcellular location">
    <subcellularLocation>
        <location evidence="2">Secreted</location>
    </subcellularLocation>
</comment>
<comment type="similarity">
    <text evidence="2">Belongs to the UPF0669 family.</text>
</comment>
<gene>
    <name type="ORF">RCJMB04_5l6</name>
</gene>
<proteinExistence type="evidence at transcript level"/>
<keyword id="KW-0325">Glycoprotein</keyword>
<keyword id="KW-1185">Reference proteome</keyword>
<keyword id="KW-0964">Secreted</keyword>
<keyword id="KW-0732">Signal</keyword>
<sequence>MAARWRRILIVFVAAQVLCLVNTFEEEDVPEEWILLHVVQGQIGAGNYSYLRLNHEGKIVLQMQSLKGDADLYVSDMTLHPSFDEYELQSVTCGQDIVHVPAHFRRPVGIGIYGHPSHQESEFEMKVYYDRTVVQYPFGEASYNPEEMEANQKYSHSTEDESQDEESVFWTVLIGILKLILEILF</sequence>
<evidence type="ECO:0000255" key="1"/>
<evidence type="ECO:0000305" key="2"/>
<dbReference type="EMBL" id="AJ719726">
    <property type="protein sequence ID" value="CAG31385.1"/>
    <property type="molecule type" value="mRNA"/>
</dbReference>
<dbReference type="RefSeq" id="NP_001026236.1">
    <property type="nucleotide sequence ID" value="NM_001031065.1"/>
</dbReference>
<dbReference type="FunCoup" id="Q5ZLK8">
    <property type="interactions" value="865"/>
</dbReference>
<dbReference type="STRING" id="9031.ENSGALP00000018229"/>
<dbReference type="GlyGen" id="Q5ZLK8">
    <property type="glycosylation" value="1 site"/>
</dbReference>
<dbReference type="PaxDb" id="9031-ENSGALP00000018229"/>
<dbReference type="KEGG" id="gga:421557"/>
<dbReference type="CTD" id="387263"/>
<dbReference type="VEuPathDB" id="HostDB:geneid_421557"/>
<dbReference type="eggNOG" id="ENOG502RXJP">
    <property type="taxonomic scope" value="Eukaryota"/>
</dbReference>
<dbReference type="InParanoid" id="Q5ZLK8"/>
<dbReference type="OrthoDB" id="10046613at2759"/>
<dbReference type="PhylomeDB" id="Q5ZLK8"/>
<dbReference type="PRO" id="PR:Q5ZLK8"/>
<dbReference type="Proteomes" id="UP000000539">
    <property type="component" value="Unassembled WGS sequence"/>
</dbReference>
<dbReference type="GO" id="GO:0005576">
    <property type="term" value="C:extracellular region"/>
    <property type="evidence" value="ECO:0007669"/>
    <property type="project" value="UniProtKB-SubCell"/>
</dbReference>
<dbReference type="InterPro" id="IPR031420">
    <property type="entry name" value="UPF0669"/>
</dbReference>
<dbReference type="PANTHER" id="PTHR31703">
    <property type="entry name" value="UPF0669 PROTEIN C6ORF120"/>
    <property type="match status" value="1"/>
</dbReference>
<dbReference type="PANTHER" id="PTHR31703:SF2">
    <property type="entry name" value="UPF0669 PROTEIN C6ORF120"/>
    <property type="match status" value="1"/>
</dbReference>
<dbReference type="Pfam" id="PF17065">
    <property type="entry name" value="UPF0669"/>
    <property type="match status" value="1"/>
</dbReference>
<organism>
    <name type="scientific">Gallus gallus</name>
    <name type="common">Chicken</name>
    <dbReference type="NCBI Taxonomy" id="9031"/>
    <lineage>
        <taxon>Eukaryota</taxon>
        <taxon>Metazoa</taxon>
        <taxon>Chordata</taxon>
        <taxon>Craniata</taxon>
        <taxon>Vertebrata</taxon>
        <taxon>Euteleostomi</taxon>
        <taxon>Archelosauria</taxon>
        <taxon>Archosauria</taxon>
        <taxon>Dinosauria</taxon>
        <taxon>Saurischia</taxon>
        <taxon>Theropoda</taxon>
        <taxon>Coelurosauria</taxon>
        <taxon>Aves</taxon>
        <taxon>Neognathae</taxon>
        <taxon>Galloanserae</taxon>
        <taxon>Galliformes</taxon>
        <taxon>Phasianidae</taxon>
        <taxon>Phasianinae</taxon>
        <taxon>Gallus</taxon>
    </lineage>
</organism>
<name>CF120_CHICK</name>
<reference key="1">
    <citation type="journal article" date="2005" name="Genome Biol.">
        <title>Full-length cDNAs from chicken bursal lymphocytes to facilitate gene function analysis.</title>
        <authorList>
            <person name="Caldwell R.B."/>
            <person name="Kierzek A.M."/>
            <person name="Arakawa H."/>
            <person name="Bezzubov Y."/>
            <person name="Zaim J."/>
            <person name="Fiedler P."/>
            <person name="Kutter S."/>
            <person name="Blagodatski A."/>
            <person name="Kostovska D."/>
            <person name="Koter M."/>
            <person name="Plachy J."/>
            <person name="Carninci P."/>
            <person name="Hayashizaki Y."/>
            <person name="Buerstedde J.-M."/>
        </authorList>
    </citation>
    <scope>NUCLEOTIDE SEQUENCE [LARGE SCALE MRNA]</scope>
    <source>
        <strain>CB</strain>
        <tissue>Bursa of Fabricius</tissue>
    </source>
</reference>
<accession>Q5ZLK8</accession>
<feature type="signal peptide" evidence="1">
    <location>
        <begin position="1"/>
        <end position="23"/>
    </location>
</feature>
<feature type="chain" id="PRO_0000297666" description="UPF0669 protein C6orf120 homolog">
    <location>
        <begin position="24"/>
        <end position="185"/>
    </location>
</feature>
<feature type="glycosylation site" description="N-linked (GlcNAc...) asparagine" evidence="1">
    <location>
        <position position="47"/>
    </location>
</feature>